<dbReference type="EMBL" id="AY014799">
    <property type="protein sequence ID" value="AAG61156.1"/>
    <property type="molecule type" value="mRNA"/>
</dbReference>
<dbReference type="EMBL" id="AL356332">
    <property type="protein sequence ID" value="CAB92064.1"/>
    <property type="molecule type" value="Genomic_DNA"/>
</dbReference>
<dbReference type="EMBL" id="CP002688">
    <property type="protein sequence ID" value="AED91510.1"/>
    <property type="molecule type" value="Genomic_DNA"/>
</dbReference>
<dbReference type="EMBL" id="BT029226">
    <property type="protein sequence ID" value="ABJ98558.1"/>
    <property type="molecule type" value="mRNA"/>
</dbReference>
<dbReference type="PIR" id="T50027">
    <property type="entry name" value="T50027"/>
</dbReference>
<dbReference type="RefSeq" id="NP_196585.1">
    <property type="nucleotide sequence ID" value="NM_121061.3"/>
</dbReference>
<dbReference type="SMR" id="Q9LX07"/>
<dbReference type="FunCoup" id="Q9LX07">
    <property type="interactions" value="346"/>
</dbReference>
<dbReference type="STRING" id="3702.Q9LX07"/>
<dbReference type="iPTMnet" id="Q9LX07"/>
<dbReference type="PaxDb" id="3702-AT5G10230.1"/>
<dbReference type="ProteomicsDB" id="244436"/>
<dbReference type="EnsemblPlants" id="AT5G10230.1">
    <property type="protein sequence ID" value="AT5G10230.1"/>
    <property type="gene ID" value="AT5G10230"/>
</dbReference>
<dbReference type="GeneID" id="830887"/>
<dbReference type="Gramene" id="AT5G10230.1">
    <property type="protein sequence ID" value="AT5G10230.1"/>
    <property type="gene ID" value="AT5G10230"/>
</dbReference>
<dbReference type="KEGG" id="ath:AT5G10230"/>
<dbReference type="Araport" id="AT5G10230"/>
<dbReference type="TAIR" id="AT5G10230">
    <property type="gene designation" value="ANNAT7"/>
</dbReference>
<dbReference type="eggNOG" id="KOG0819">
    <property type="taxonomic scope" value="Eukaryota"/>
</dbReference>
<dbReference type="HOGENOM" id="CLU_025300_0_1_1"/>
<dbReference type="InParanoid" id="Q9LX07"/>
<dbReference type="OMA" id="AVMLWTF"/>
<dbReference type="PhylomeDB" id="Q9LX07"/>
<dbReference type="PRO" id="PR:Q9LX07"/>
<dbReference type="Proteomes" id="UP000006548">
    <property type="component" value="Chromosome 5"/>
</dbReference>
<dbReference type="ExpressionAtlas" id="Q9LX07">
    <property type="expression patterns" value="baseline and differential"/>
</dbReference>
<dbReference type="GO" id="GO:0005509">
    <property type="term" value="F:calcium ion binding"/>
    <property type="evidence" value="ECO:0000250"/>
    <property type="project" value="UniProtKB"/>
</dbReference>
<dbReference type="GO" id="GO:0005544">
    <property type="term" value="F:calcium-dependent phospholipid binding"/>
    <property type="evidence" value="ECO:0007669"/>
    <property type="project" value="UniProtKB-KW"/>
</dbReference>
<dbReference type="GO" id="GO:0009409">
    <property type="term" value="P:response to cold"/>
    <property type="evidence" value="ECO:0000270"/>
    <property type="project" value="TAIR"/>
</dbReference>
<dbReference type="GO" id="GO:0009408">
    <property type="term" value="P:response to heat"/>
    <property type="evidence" value="ECO:0000270"/>
    <property type="project" value="TAIR"/>
</dbReference>
<dbReference type="GO" id="GO:0009651">
    <property type="term" value="P:response to salt stress"/>
    <property type="evidence" value="ECO:0000270"/>
    <property type="project" value="TAIR"/>
</dbReference>
<dbReference type="GO" id="GO:0009414">
    <property type="term" value="P:response to water deprivation"/>
    <property type="evidence" value="ECO:0000270"/>
    <property type="project" value="TAIR"/>
</dbReference>
<dbReference type="FunFam" id="1.10.220.10:FF:000001">
    <property type="entry name" value="Annexin"/>
    <property type="match status" value="1"/>
</dbReference>
<dbReference type="FunFam" id="1.10.220.10:FF:000006">
    <property type="entry name" value="Annexin"/>
    <property type="match status" value="1"/>
</dbReference>
<dbReference type="FunFam" id="1.10.220.10:FF:000008">
    <property type="entry name" value="Annexin"/>
    <property type="match status" value="1"/>
</dbReference>
<dbReference type="FunFam" id="1.10.220.10:FF:000009">
    <property type="entry name" value="Annexin"/>
    <property type="match status" value="1"/>
</dbReference>
<dbReference type="Gene3D" id="1.10.220.10">
    <property type="entry name" value="Annexin"/>
    <property type="match status" value="4"/>
</dbReference>
<dbReference type="InterPro" id="IPR001464">
    <property type="entry name" value="Annexin"/>
</dbReference>
<dbReference type="InterPro" id="IPR018502">
    <property type="entry name" value="Annexin_repeat"/>
</dbReference>
<dbReference type="InterPro" id="IPR018252">
    <property type="entry name" value="Annexin_repeat_CS"/>
</dbReference>
<dbReference type="InterPro" id="IPR037104">
    <property type="entry name" value="Annexin_sf"/>
</dbReference>
<dbReference type="InterPro" id="IPR009118">
    <property type="entry name" value="AnnexinD_plant"/>
</dbReference>
<dbReference type="PANTHER" id="PTHR10502">
    <property type="entry name" value="ANNEXIN"/>
    <property type="match status" value="1"/>
</dbReference>
<dbReference type="PANTHER" id="PTHR10502:SF195">
    <property type="entry name" value="ANNEXIN D7"/>
    <property type="match status" value="1"/>
</dbReference>
<dbReference type="Pfam" id="PF00191">
    <property type="entry name" value="Annexin"/>
    <property type="match status" value="4"/>
</dbReference>
<dbReference type="PRINTS" id="PR00196">
    <property type="entry name" value="ANNEXIN"/>
</dbReference>
<dbReference type="PRINTS" id="PR01814">
    <property type="entry name" value="ANNEXINPLANT"/>
</dbReference>
<dbReference type="SMART" id="SM00335">
    <property type="entry name" value="ANX"/>
    <property type="match status" value="4"/>
</dbReference>
<dbReference type="SUPFAM" id="SSF47874">
    <property type="entry name" value="Annexin"/>
    <property type="match status" value="1"/>
</dbReference>
<dbReference type="PROSITE" id="PS00223">
    <property type="entry name" value="ANNEXIN_1"/>
    <property type="match status" value="1"/>
</dbReference>
<dbReference type="PROSITE" id="PS51897">
    <property type="entry name" value="ANNEXIN_2"/>
    <property type="match status" value="4"/>
</dbReference>
<gene>
    <name type="primary">ANNAT7</name>
    <name type="synonym">ANN7</name>
    <name type="ordered locus">At5g10230</name>
    <name type="ORF">F18D22.4</name>
    <name type="ORF">T31P16_220</name>
</gene>
<accession>Q9LX07</accession>
<accession>Q9C5V2</accession>
<name>ANXD7_ARATH</name>
<comment type="tissue specificity">
    <text evidence="5">Expressed in flowers.</text>
</comment>
<comment type="induction">
    <text evidence="6">Up-regulated by cold, heat shock and salt stresses.</text>
</comment>
<comment type="domain">
    <text>A pair of annexin repeats may form one binding site for calcium and phospholipid.</text>
</comment>
<comment type="similarity">
    <text evidence="7">Belongs to the annexin (TC 1.A.31.1) family.</text>
</comment>
<organism>
    <name type="scientific">Arabidopsis thaliana</name>
    <name type="common">Mouse-ear cress</name>
    <dbReference type="NCBI Taxonomy" id="3702"/>
    <lineage>
        <taxon>Eukaryota</taxon>
        <taxon>Viridiplantae</taxon>
        <taxon>Streptophyta</taxon>
        <taxon>Embryophyta</taxon>
        <taxon>Tracheophyta</taxon>
        <taxon>Spermatophyta</taxon>
        <taxon>Magnoliopsida</taxon>
        <taxon>eudicotyledons</taxon>
        <taxon>Gunneridae</taxon>
        <taxon>Pentapetalae</taxon>
        <taxon>rosids</taxon>
        <taxon>malvids</taxon>
        <taxon>Brassicales</taxon>
        <taxon>Brassicaceae</taxon>
        <taxon>Camelineae</taxon>
        <taxon>Arabidopsis</taxon>
    </lineage>
</organism>
<protein>
    <recommendedName>
        <fullName>Annexin D7</fullName>
    </recommendedName>
    <alternativeName>
        <fullName>AnnAt7</fullName>
    </alternativeName>
</protein>
<evidence type="ECO:0000250" key="1">
    <source>
        <dbReference type="UniProtKB" id="P93157"/>
    </source>
</evidence>
<evidence type="ECO:0000250" key="2">
    <source>
        <dbReference type="UniProtKB" id="Q9SYT0"/>
    </source>
</evidence>
<evidence type="ECO:0000250" key="3">
    <source>
        <dbReference type="UniProtKB" id="Q9XEE2"/>
    </source>
</evidence>
<evidence type="ECO:0000255" key="4">
    <source>
        <dbReference type="PROSITE-ProRule" id="PRU01245"/>
    </source>
</evidence>
<evidence type="ECO:0000269" key="5">
    <source>
    </source>
</evidence>
<evidence type="ECO:0000269" key="6">
    <source>
    </source>
</evidence>
<evidence type="ECO:0000305" key="7"/>
<reference key="1">
    <citation type="journal article" date="2001" name="Plant Physiol.">
        <title>Differential expression of members of the annexin multigene family in Arabidopsis.</title>
        <authorList>
            <person name="Clark G.B."/>
            <person name="Sessions A."/>
            <person name="Eastburn D.J."/>
            <person name="Roux S.J."/>
        </authorList>
    </citation>
    <scope>NUCLEOTIDE SEQUENCE [MRNA]</scope>
    <scope>TISSUE SPECIFICITY</scope>
</reference>
<reference key="2">
    <citation type="journal article" date="2000" name="Nature">
        <title>Sequence and analysis of chromosome 5 of the plant Arabidopsis thaliana.</title>
        <authorList>
            <person name="Tabata S."/>
            <person name="Kaneko T."/>
            <person name="Nakamura Y."/>
            <person name="Kotani H."/>
            <person name="Kato T."/>
            <person name="Asamizu E."/>
            <person name="Miyajima N."/>
            <person name="Sasamoto S."/>
            <person name="Kimura T."/>
            <person name="Hosouchi T."/>
            <person name="Kawashima K."/>
            <person name="Kohara M."/>
            <person name="Matsumoto M."/>
            <person name="Matsuno A."/>
            <person name="Muraki A."/>
            <person name="Nakayama S."/>
            <person name="Nakazaki N."/>
            <person name="Naruo K."/>
            <person name="Okumura S."/>
            <person name="Shinpo S."/>
            <person name="Takeuchi C."/>
            <person name="Wada T."/>
            <person name="Watanabe A."/>
            <person name="Yamada M."/>
            <person name="Yasuda M."/>
            <person name="Sato S."/>
            <person name="de la Bastide M."/>
            <person name="Huang E."/>
            <person name="Spiegel L."/>
            <person name="Gnoj L."/>
            <person name="O'Shaughnessy A."/>
            <person name="Preston R."/>
            <person name="Habermann K."/>
            <person name="Murray J."/>
            <person name="Johnson D."/>
            <person name="Rohlfing T."/>
            <person name="Nelson J."/>
            <person name="Stoneking T."/>
            <person name="Pepin K."/>
            <person name="Spieth J."/>
            <person name="Sekhon M."/>
            <person name="Armstrong J."/>
            <person name="Becker M."/>
            <person name="Belter E."/>
            <person name="Cordum H."/>
            <person name="Cordes M."/>
            <person name="Courtney L."/>
            <person name="Courtney W."/>
            <person name="Dante M."/>
            <person name="Du H."/>
            <person name="Edwards J."/>
            <person name="Fryman J."/>
            <person name="Haakensen B."/>
            <person name="Lamar E."/>
            <person name="Latreille P."/>
            <person name="Leonard S."/>
            <person name="Meyer R."/>
            <person name="Mulvaney E."/>
            <person name="Ozersky P."/>
            <person name="Riley A."/>
            <person name="Strowmatt C."/>
            <person name="Wagner-McPherson C."/>
            <person name="Wollam A."/>
            <person name="Yoakum M."/>
            <person name="Bell M."/>
            <person name="Dedhia N."/>
            <person name="Parnell L."/>
            <person name="Shah R."/>
            <person name="Rodriguez M."/>
            <person name="Hoon See L."/>
            <person name="Vil D."/>
            <person name="Baker J."/>
            <person name="Kirchoff K."/>
            <person name="Toth K."/>
            <person name="King L."/>
            <person name="Bahret A."/>
            <person name="Miller B."/>
            <person name="Marra M.A."/>
            <person name="Martienssen R."/>
            <person name="McCombie W.R."/>
            <person name="Wilson R.K."/>
            <person name="Murphy G."/>
            <person name="Bancroft I."/>
            <person name="Volckaert G."/>
            <person name="Wambutt R."/>
            <person name="Duesterhoeft A."/>
            <person name="Stiekema W."/>
            <person name="Pohl T."/>
            <person name="Entian K.-D."/>
            <person name="Terryn N."/>
            <person name="Hartley N."/>
            <person name="Bent E."/>
            <person name="Johnson S."/>
            <person name="Langham S.-A."/>
            <person name="McCullagh B."/>
            <person name="Robben J."/>
            <person name="Grymonprez B."/>
            <person name="Zimmermann W."/>
            <person name="Ramsperger U."/>
            <person name="Wedler H."/>
            <person name="Balke K."/>
            <person name="Wedler E."/>
            <person name="Peters S."/>
            <person name="van Staveren M."/>
            <person name="Dirkse W."/>
            <person name="Mooijman P."/>
            <person name="Klein Lankhorst R."/>
            <person name="Weitzenegger T."/>
            <person name="Bothe G."/>
            <person name="Rose M."/>
            <person name="Hauf J."/>
            <person name="Berneiser S."/>
            <person name="Hempel S."/>
            <person name="Feldpausch M."/>
            <person name="Lamberth S."/>
            <person name="Villarroel R."/>
            <person name="Gielen J."/>
            <person name="Ardiles W."/>
            <person name="Bents O."/>
            <person name="Lemcke K."/>
            <person name="Kolesov G."/>
            <person name="Mayer K.F.X."/>
            <person name="Rudd S."/>
            <person name="Schoof H."/>
            <person name="Schueller C."/>
            <person name="Zaccaria P."/>
            <person name="Mewes H.-W."/>
            <person name="Bevan M."/>
            <person name="Fransz P.F."/>
        </authorList>
    </citation>
    <scope>NUCLEOTIDE SEQUENCE [LARGE SCALE GENOMIC DNA]</scope>
    <source>
        <strain>cv. Columbia</strain>
    </source>
</reference>
<reference key="3">
    <citation type="journal article" date="2017" name="Plant J.">
        <title>Araport11: a complete reannotation of the Arabidopsis thaliana reference genome.</title>
        <authorList>
            <person name="Cheng C.Y."/>
            <person name="Krishnakumar V."/>
            <person name="Chan A.P."/>
            <person name="Thibaud-Nissen F."/>
            <person name="Schobel S."/>
            <person name="Town C.D."/>
        </authorList>
    </citation>
    <scope>GENOME REANNOTATION</scope>
    <source>
        <strain>cv. Columbia</strain>
    </source>
</reference>
<reference key="4">
    <citation type="submission" date="2006-10" db="EMBL/GenBank/DDBJ databases">
        <title>Arabidopsis ORF clones.</title>
        <authorList>
            <person name="Quinitio C."/>
            <person name="Chen H."/>
            <person name="Kim C.J."/>
            <person name="Shinn P."/>
            <person name="Ecker J.R."/>
        </authorList>
    </citation>
    <scope>NUCLEOTIDE SEQUENCE [LARGE SCALE MRNA]</scope>
    <source>
        <strain>cv. Columbia</strain>
    </source>
</reference>
<reference key="5">
    <citation type="journal article" date="2006" name="Plant Physiol. Biochem.">
        <title>Expression profiling of the Arabidopsis annexin gene family during germination, de-etiolation and abiotic stress.</title>
        <authorList>
            <person name="Cantero A."/>
            <person name="Barthakur S."/>
            <person name="Bushart T.J."/>
            <person name="Chou S."/>
            <person name="Morgan R.O."/>
            <person name="Fernandez M.P."/>
            <person name="Clark G.B."/>
            <person name="Roux S.J."/>
        </authorList>
    </citation>
    <scope>INDUCTION</scope>
    <scope>GENE FAMILY</scope>
</reference>
<feature type="initiator methionine" description="Removed" evidence="2">
    <location>
        <position position="1"/>
    </location>
</feature>
<feature type="chain" id="PRO_0000278821" description="Annexin D7">
    <location>
        <begin position="2"/>
        <end position="316"/>
    </location>
</feature>
<feature type="repeat" description="Annexin 1" evidence="4">
    <location>
        <begin position="11"/>
        <end position="82"/>
    </location>
</feature>
<feature type="repeat" description="Annexin 2" evidence="4">
    <location>
        <begin position="83"/>
        <end position="154"/>
    </location>
</feature>
<feature type="repeat" description="Annexin 3" evidence="4">
    <location>
        <begin position="166"/>
        <end position="237"/>
    </location>
</feature>
<feature type="repeat" description="Annexin 4" evidence="4">
    <location>
        <begin position="241"/>
        <end position="312"/>
    </location>
</feature>
<feature type="binding site" evidence="1">
    <location>
        <position position="24"/>
    </location>
    <ligand>
        <name>Ca(2+)</name>
        <dbReference type="ChEBI" id="CHEBI:29108"/>
        <label>1</label>
    </ligand>
</feature>
<feature type="binding site" evidence="1">
    <location>
        <position position="26"/>
    </location>
    <ligand>
        <name>Ca(2+)</name>
        <dbReference type="ChEBI" id="CHEBI:29108"/>
        <label>1</label>
    </ligand>
</feature>
<feature type="binding site" evidence="1">
    <location>
        <position position="28"/>
    </location>
    <ligand>
        <name>Ca(2+)</name>
        <dbReference type="ChEBI" id="CHEBI:29108"/>
        <label>1</label>
    </ligand>
</feature>
<feature type="binding site" evidence="1">
    <location>
        <position position="68"/>
    </location>
    <ligand>
        <name>Ca(2+)</name>
        <dbReference type="ChEBI" id="CHEBI:29108"/>
        <label>1</label>
    </ligand>
</feature>
<feature type="binding site" evidence="1">
    <location>
        <position position="254"/>
    </location>
    <ligand>
        <name>Ca(2+)</name>
        <dbReference type="ChEBI" id="CHEBI:29108"/>
        <label>2</label>
    </ligand>
</feature>
<feature type="binding site" evidence="1">
    <location>
        <position position="258"/>
    </location>
    <ligand>
        <name>Ca(2+)</name>
        <dbReference type="ChEBI" id="CHEBI:29108"/>
        <label>2</label>
    </ligand>
</feature>
<feature type="binding site" evidence="1">
    <location>
        <position position="298"/>
    </location>
    <ligand>
        <name>Ca(2+)</name>
        <dbReference type="ChEBI" id="CHEBI:29108"/>
        <label>2</label>
    </ligand>
</feature>
<feature type="binding site" evidence="1">
    <location>
        <position position="299"/>
    </location>
    <ligand>
        <name>Ca(2+)</name>
        <dbReference type="ChEBI" id="CHEBI:29108"/>
        <label>3</label>
    </ligand>
</feature>
<feature type="binding site" evidence="1">
    <location>
        <position position="304"/>
    </location>
    <ligand>
        <name>Ca(2+)</name>
        <dbReference type="ChEBI" id="CHEBI:29108"/>
        <label>3</label>
    </ligand>
</feature>
<feature type="modified residue" description="N-acetylalanine" evidence="2">
    <location>
        <position position="2"/>
    </location>
</feature>
<feature type="modified residue" description="Phosphoserine" evidence="3">
    <location>
        <position position="95"/>
    </location>
</feature>
<feature type="modified residue" description="Phosphothreonine" evidence="3">
    <location>
        <position position="100"/>
    </location>
</feature>
<feature type="modified residue" description="Phosphothreonine" evidence="2">
    <location>
        <position position="112"/>
    </location>
</feature>
<feature type="modified residue" description="Phosphotyrosine" evidence="3">
    <location>
        <position position="129"/>
    </location>
</feature>
<feature type="modified residue" description="Phosphotyrosine" evidence="2">
    <location>
        <position position="283"/>
    </location>
</feature>
<feature type="modified residue" description="Phosphoserine" evidence="2">
    <location>
        <position position="288"/>
    </location>
</feature>
<feature type="sequence conflict" description="In Ref. 1; AAG61156." evidence="7" ref="1">
    <original>A</original>
    <variation>S</variation>
    <location>
        <position position="23"/>
    </location>
</feature>
<feature type="sequence conflict" description="In Ref. 1; AAG61156." evidence="7" ref="1">
    <original>D</original>
    <variation>Y</variation>
    <location>
        <position position="88"/>
    </location>
</feature>
<feature type="sequence conflict" description="In Ref. 1; AAG61156." evidence="7" ref="1">
    <original>K</original>
    <variation>R</variation>
    <location>
        <position position="122"/>
    </location>
</feature>
<feature type="sequence conflict" description="In Ref. 1; AAG61156." evidence="7" ref="1">
    <original>D</original>
    <variation>V</variation>
    <location>
        <position position="275"/>
    </location>
</feature>
<proteinExistence type="evidence at transcript level"/>
<keyword id="KW-0007">Acetylation</keyword>
<keyword id="KW-0041">Annexin</keyword>
<keyword id="KW-0106">Calcium</keyword>
<keyword id="KW-0111">Calcium/phospholipid-binding</keyword>
<keyword id="KW-0479">Metal-binding</keyword>
<keyword id="KW-0597">Phosphoprotein</keyword>
<keyword id="KW-1185">Reference proteome</keyword>
<keyword id="KW-0677">Repeat</keyword>
<sequence length="316" mass="36496">MASLKVPATVPLPEEDAEQLYKAFKGWGTNERMIISILAHRNATQRSFIRAVYAANYNKDLLKELDRELSGDFERAVMLWTFEPAERDAYLAKESTKMFTKNNWVLVEIACTRSALELFNAKQAYQARYKTSLEEDVAYHTSGDIRKLLVPLVSTFRYDGDEVNMTLARSEAKILHEKIKEKAYADDDLIRILTTRSKAQISATLNHYKNNFGTSMSKYLKEDSENEYIQLLKAVIKCLTYPEKYFEKVLRQAINKLGTDEWGLTRVVTTRAEFDMERIKEEYIRRNSVPLDRAIAKDTHGDYEDILLALLGHDHA</sequence>